<accession>A1RGD7</accession>
<evidence type="ECO:0000255" key="1">
    <source>
        <dbReference type="HAMAP-Rule" id="MF_01540"/>
    </source>
</evidence>
<comment type="function">
    <text evidence="1">Component of the sulfite reductase complex that catalyzes the 6-electron reduction of sulfite to sulfide. This is one of several activities required for the biosynthesis of L-cysteine from sulfate.</text>
</comment>
<comment type="catalytic activity">
    <reaction evidence="1">
        <text>hydrogen sulfide + 3 NADP(+) + 3 H2O = sulfite + 3 NADPH + 4 H(+)</text>
        <dbReference type="Rhea" id="RHEA:13801"/>
        <dbReference type="ChEBI" id="CHEBI:15377"/>
        <dbReference type="ChEBI" id="CHEBI:15378"/>
        <dbReference type="ChEBI" id="CHEBI:17359"/>
        <dbReference type="ChEBI" id="CHEBI:29919"/>
        <dbReference type="ChEBI" id="CHEBI:57783"/>
        <dbReference type="ChEBI" id="CHEBI:58349"/>
        <dbReference type="EC" id="1.8.1.2"/>
    </reaction>
</comment>
<comment type="cofactor">
    <cofactor evidence="1">
        <name>siroheme</name>
        <dbReference type="ChEBI" id="CHEBI:60052"/>
    </cofactor>
    <text evidence="1">Binds 1 siroheme per subunit.</text>
</comment>
<comment type="cofactor">
    <cofactor evidence="1">
        <name>[4Fe-4S] cluster</name>
        <dbReference type="ChEBI" id="CHEBI:49883"/>
    </cofactor>
    <text evidence="1">Binds 1 [4Fe-4S] cluster per subunit.</text>
</comment>
<comment type="pathway">
    <text evidence="1">Sulfur metabolism; hydrogen sulfide biosynthesis; hydrogen sulfide from sulfite (NADPH route): step 1/1.</text>
</comment>
<comment type="subunit">
    <text evidence="1">Alpha(8)-beta(8). The alpha component is a flavoprotein, the beta component is a hemoprotein.</text>
</comment>
<comment type="similarity">
    <text evidence="1">Belongs to the nitrite and sulfite reductase 4Fe-4S domain family.</text>
</comment>
<dbReference type="EC" id="1.8.1.2" evidence="1"/>
<dbReference type="EMBL" id="CP000503">
    <property type="protein sequence ID" value="ABM23732.1"/>
    <property type="molecule type" value="Genomic_DNA"/>
</dbReference>
<dbReference type="RefSeq" id="WP_011788259.1">
    <property type="nucleotide sequence ID" value="NC_008750.1"/>
</dbReference>
<dbReference type="SMR" id="A1RGD7"/>
<dbReference type="KEGG" id="shw:Sputw3181_0882"/>
<dbReference type="HOGENOM" id="CLU_001975_3_2_6"/>
<dbReference type="UniPathway" id="UPA00140">
    <property type="reaction ID" value="UER00207"/>
</dbReference>
<dbReference type="Proteomes" id="UP000002597">
    <property type="component" value="Chromosome"/>
</dbReference>
<dbReference type="GO" id="GO:0009337">
    <property type="term" value="C:sulfite reductase complex (NADPH)"/>
    <property type="evidence" value="ECO:0007669"/>
    <property type="project" value="InterPro"/>
</dbReference>
<dbReference type="GO" id="GO:0051539">
    <property type="term" value="F:4 iron, 4 sulfur cluster binding"/>
    <property type="evidence" value="ECO:0007669"/>
    <property type="project" value="UniProtKB-KW"/>
</dbReference>
<dbReference type="GO" id="GO:0020037">
    <property type="term" value="F:heme binding"/>
    <property type="evidence" value="ECO:0007669"/>
    <property type="project" value="InterPro"/>
</dbReference>
<dbReference type="GO" id="GO:0046872">
    <property type="term" value="F:metal ion binding"/>
    <property type="evidence" value="ECO:0007669"/>
    <property type="project" value="UniProtKB-KW"/>
</dbReference>
<dbReference type="GO" id="GO:0050661">
    <property type="term" value="F:NADP binding"/>
    <property type="evidence" value="ECO:0007669"/>
    <property type="project" value="InterPro"/>
</dbReference>
<dbReference type="GO" id="GO:0050311">
    <property type="term" value="F:sulfite reductase (ferredoxin) activity"/>
    <property type="evidence" value="ECO:0007669"/>
    <property type="project" value="TreeGrafter"/>
</dbReference>
<dbReference type="GO" id="GO:0004783">
    <property type="term" value="F:sulfite reductase (NADPH) activity"/>
    <property type="evidence" value="ECO:0007669"/>
    <property type="project" value="UniProtKB-UniRule"/>
</dbReference>
<dbReference type="GO" id="GO:0019344">
    <property type="term" value="P:cysteine biosynthetic process"/>
    <property type="evidence" value="ECO:0007669"/>
    <property type="project" value="UniProtKB-KW"/>
</dbReference>
<dbReference type="GO" id="GO:0070814">
    <property type="term" value="P:hydrogen sulfide biosynthetic process"/>
    <property type="evidence" value="ECO:0007669"/>
    <property type="project" value="UniProtKB-UniRule"/>
</dbReference>
<dbReference type="GO" id="GO:0000103">
    <property type="term" value="P:sulfate assimilation"/>
    <property type="evidence" value="ECO:0007669"/>
    <property type="project" value="UniProtKB-UniRule"/>
</dbReference>
<dbReference type="FunFam" id="3.30.413.10:FF:000003">
    <property type="entry name" value="Sulfite reductase [NADPH] hemoprotein beta-component"/>
    <property type="match status" value="1"/>
</dbReference>
<dbReference type="FunFam" id="3.30.413.10:FF:000004">
    <property type="entry name" value="Sulfite reductase [NADPH] hemoprotein beta-component"/>
    <property type="match status" value="1"/>
</dbReference>
<dbReference type="Gene3D" id="3.30.413.10">
    <property type="entry name" value="Sulfite Reductase Hemoprotein, domain 1"/>
    <property type="match status" value="2"/>
</dbReference>
<dbReference type="HAMAP" id="MF_01540">
    <property type="entry name" value="CysI"/>
    <property type="match status" value="1"/>
</dbReference>
<dbReference type="InterPro" id="IPR011786">
    <property type="entry name" value="CysI"/>
</dbReference>
<dbReference type="InterPro" id="IPR005117">
    <property type="entry name" value="NiRdtase/SiRdtase_haem-b_fer"/>
</dbReference>
<dbReference type="InterPro" id="IPR036136">
    <property type="entry name" value="Nit/Sulf_reduc_fer-like_dom_sf"/>
</dbReference>
<dbReference type="InterPro" id="IPR006067">
    <property type="entry name" value="NO2/SO3_Rdtase_4Fe4S_dom"/>
</dbReference>
<dbReference type="InterPro" id="IPR045169">
    <property type="entry name" value="NO2/SO3_Rdtase_4Fe4S_prot"/>
</dbReference>
<dbReference type="InterPro" id="IPR045854">
    <property type="entry name" value="NO2/SO3_Rdtase_4Fe4S_sf"/>
</dbReference>
<dbReference type="InterPro" id="IPR006066">
    <property type="entry name" value="NO2/SO3_Rdtase_FeS/sirohaem_BS"/>
</dbReference>
<dbReference type="NCBIfam" id="TIGR02041">
    <property type="entry name" value="CysI"/>
    <property type="match status" value="1"/>
</dbReference>
<dbReference type="NCBIfam" id="NF010029">
    <property type="entry name" value="PRK13504.1"/>
    <property type="match status" value="1"/>
</dbReference>
<dbReference type="PANTHER" id="PTHR11493:SF47">
    <property type="entry name" value="SULFITE REDUCTASE [NADPH] SUBUNIT BETA"/>
    <property type="match status" value="1"/>
</dbReference>
<dbReference type="PANTHER" id="PTHR11493">
    <property type="entry name" value="SULFITE REDUCTASE [NADPH] SUBUNIT BETA-RELATED"/>
    <property type="match status" value="1"/>
</dbReference>
<dbReference type="Pfam" id="PF01077">
    <property type="entry name" value="NIR_SIR"/>
    <property type="match status" value="1"/>
</dbReference>
<dbReference type="Pfam" id="PF03460">
    <property type="entry name" value="NIR_SIR_ferr"/>
    <property type="match status" value="2"/>
</dbReference>
<dbReference type="PRINTS" id="PR00397">
    <property type="entry name" value="SIROHAEM"/>
</dbReference>
<dbReference type="SUPFAM" id="SSF56014">
    <property type="entry name" value="Nitrite and sulphite reductase 4Fe-4S domain-like"/>
    <property type="match status" value="2"/>
</dbReference>
<dbReference type="SUPFAM" id="SSF55124">
    <property type="entry name" value="Nitrite/Sulfite reductase N-terminal domain-like"/>
    <property type="match status" value="2"/>
</dbReference>
<dbReference type="PROSITE" id="PS00365">
    <property type="entry name" value="NIR_SIR"/>
    <property type="match status" value="1"/>
</dbReference>
<gene>
    <name evidence="1" type="primary">cysI</name>
    <name type="ordered locus">Sputw3181_0882</name>
</gene>
<keyword id="KW-0004">4Fe-4S</keyword>
<keyword id="KW-0028">Amino-acid biosynthesis</keyword>
<keyword id="KW-0198">Cysteine biosynthesis</keyword>
<keyword id="KW-0349">Heme</keyword>
<keyword id="KW-0408">Iron</keyword>
<keyword id="KW-0411">Iron-sulfur</keyword>
<keyword id="KW-0479">Metal-binding</keyword>
<keyword id="KW-0521">NADP</keyword>
<keyword id="KW-0560">Oxidoreductase</keyword>
<organism>
    <name type="scientific">Shewanella sp. (strain W3-18-1)</name>
    <dbReference type="NCBI Taxonomy" id="351745"/>
    <lineage>
        <taxon>Bacteria</taxon>
        <taxon>Pseudomonadati</taxon>
        <taxon>Pseudomonadota</taxon>
        <taxon>Gammaproteobacteria</taxon>
        <taxon>Alteromonadales</taxon>
        <taxon>Shewanellaceae</taxon>
        <taxon>Shewanella</taxon>
    </lineage>
</organism>
<protein>
    <recommendedName>
        <fullName evidence="1">Sulfite reductase [NADPH] hemoprotein beta-component</fullName>
        <shortName evidence="1">SiR-HP</shortName>
        <shortName evidence="1">SiRHP</shortName>
        <ecNumber evidence="1">1.8.1.2</ecNumber>
    </recommendedName>
</protein>
<proteinExistence type="inferred from homology"/>
<name>CYSI_SHESW</name>
<sequence length="565" mass="62996">MSEQKLALNEYLKTDSDYLRGTIKEGLDSSVTGSFSDGDQQLIKFHGFYQQDDRDLRNERKEQKLEPLYSFMLRARVPGGICTPQQWLGVDKIASTLTSSNSIRLTTRQTFQYHGIPKRNLKTIIQDLDRQALDSIAACGDVNRNVMCNPNPVESKLHEQAYAVAKKLSDHLLPHTRAYAEIWLDEEKLLTTEDETVEPVYGKTYLPRKFKMAVAVPPDNDVDVYTNDLGFIAVAENGELVGFNLTAGGGMGSTHGEVETFPRLADDFGFIKTEDVMKFAEAVMTVQRDWGNRSNRKRSRLKYTIVDHGYEKFKAEVEARAGVKFEPKRDVVIGDRGDRYGWVEGVDGKWHLTLFIESGRIKDLPGQTLQTGLREIAKIHKGDFRMTSNQNMIIAGVAAEDKATIEGLARKHGLLGQVLTQTRGHSIACVALPTCPLAMAEAERYFPEFIDHIDALQAKHGISEQAIVVRMTGCPNGCARPFAAEIGLVGKAPGRYNLYLGASFEGTRLNKMHRENIQEADILAELDTLFGRYAVERDAGETFGNFTVRVGVVKAVIDAAKDFHG</sequence>
<reference key="1">
    <citation type="submission" date="2006-12" db="EMBL/GenBank/DDBJ databases">
        <title>Complete sequence of Shewanella sp. W3-18-1.</title>
        <authorList>
            <consortium name="US DOE Joint Genome Institute"/>
            <person name="Copeland A."/>
            <person name="Lucas S."/>
            <person name="Lapidus A."/>
            <person name="Barry K."/>
            <person name="Detter J.C."/>
            <person name="Glavina del Rio T."/>
            <person name="Hammon N."/>
            <person name="Israni S."/>
            <person name="Dalin E."/>
            <person name="Tice H."/>
            <person name="Pitluck S."/>
            <person name="Chain P."/>
            <person name="Malfatti S."/>
            <person name="Shin M."/>
            <person name="Vergez L."/>
            <person name="Schmutz J."/>
            <person name="Larimer F."/>
            <person name="Land M."/>
            <person name="Hauser L."/>
            <person name="Kyrpides N."/>
            <person name="Lykidis A."/>
            <person name="Tiedje J."/>
            <person name="Richardson P."/>
        </authorList>
    </citation>
    <scope>NUCLEOTIDE SEQUENCE [LARGE SCALE GENOMIC DNA]</scope>
    <source>
        <strain>W3-18-1</strain>
    </source>
</reference>
<feature type="chain" id="PRO_1000068774" description="Sulfite reductase [NADPH] hemoprotein beta-component">
    <location>
        <begin position="1"/>
        <end position="565"/>
    </location>
</feature>
<feature type="binding site" evidence="1">
    <location>
        <position position="429"/>
    </location>
    <ligand>
        <name>[4Fe-4S] cluster</name>
        <dbReference type="ChEBI" id="CHEBI:49883"/>
    </ligand>
</feature>
<feature type="binding site" evidence="1">
    <location>
        <position position="435"/>
    </location>
    <ligand>
        <name>[4Fe-4S] cluster</name>
        <dbReference type="ChEBI" id="CHEBI:49883"/>
    </ligand>
</feature>
<feature type="binding site" evidence="1">
    <location>
        <position position="474"/>
    </location>
    <ligand>
        <name>[4Fe-4S] cluster</name>
        <dbReference type="ChEBI" id="CHEBI:49883"/>
    </ligand>
</feature>
<feature type="binding site" evidence="1">
    <location>
        <position position="478"/>
    </location>
    <ligand>
        <name>[4Fe-4S] cluster</name>
        <dbReference type="ChEBI" id="CHEBI:49883"/>
    </ligand>
</feature>
<feature type="binding site" description="axial binding residue" evidence="1">
    <location>
        <position position="478"/>
    </location>
    <ligand>
        <name>siroheme</name>
        <dbReference type="ChEBI" id="CHEBI:60052"/>
    </ligand>
    <ligandPart>
        <name>Fe</name>
        <dbReference type="ChEBI" id="CHEBI:18248"/>
    </ligandPart>
</feature>